<reference key="1">
    <citation type="submission" date="2000-02" db="EMBL/GenBank/DDBJ databases">
        <title>Mouse syntaxin 5.</title>
        <authorList>
            <person name="Low D.Y.H."/>
            <person name="Tang B.L."/>
            <person name="Hong W."/>
        </authorList>
    </citation>
    <scope>NUCLEOTIDE SEQUENCE [MRNA] (ISOFORM 2)</scope>
</reference>
<reference key="2">
    <citation type="journal article" date="2005" name="Science">
        <title>The transcriptional landscape of the mammalian genome.</title>
        <authorList>
            <person name="Carninci P."/>
            <person name="Kasukawa T."/>
            <person name="Katayama S."/>
            <person name="Gough J."/>
            <person name="Frith M.C."/>
            <person name="Maeda N."/>
            <person name="Oyama R."/>
            <person name="Ravasi T."/>
            <person name="Lenhard B."/>
            <person name="Wells C."/>
            <person name="Kodzius R."/>
            <person name="Shimokawa K."/>
            <person name="Bajic V.B."/>
            <person name="Brenner S.E."/>
            <person name="Batalov S."/>
            <person name="Forrest A.R."/>
            <person name="Zavolan M."/>
            <person name="Davis M.J."/>
            <person name="Wilming L.G."/>
            <person name="Aidinis V."/>
            <person name="Allen J.E."/>
            <person name="Ambesi-Impiombato A."/>
            <person name="Apweiler R."/>
            <person name="Aturaliya R.N."/>
            <person name="Bailey T.L."/>
            <person name="Bansal M."/>
            <person name="Baxter L."/>
            <person name="Beisel K.W."/>
            <person name="Bersano T."/>
            <person name="Bono H."/>
            <person name="Chalk A.M."/>
            <person name="Chiu K.P."/>
            <person name="Choudhary V."/>
            <person name="Christoffels A."/>
            <person name="Clutterbuck D.R."/>
            <person name="Crowe M.L."/>
            <person name="Dalla E."/>
            <person name="Dalrymple B.P."/>
            <person name="de Bono B."/>
            <person name="Della Gatta G."/>
            <person name="di Bernardo D."/>
            <person name="Down T."/>
            <person name="Engstrom P."/>
            <person name="Fagiolini M."/>
            <person name="Faulkner G."/>
            <person name="Fletcher C.F."/>
            <person name="Fukushima T."/>
            <person name="Furuno M."/>
            <person name="Futaki S."/>
            <person name="Gariboldi M."/>
            <person name="Georgii-Hemming P."/>
            <person name="Gingeras T.R."/>
            <person name="Gojobori T."/>
            <person name="Green R.E."/>
            <person name="Gustincich S."/>
            <person name="Harbers M."/>
            <person name="Hayashi Y."/>
            <person name="Hensch T.K."/>
            <person name="Hirokawa N."/>
            <person name="Hill D."/>
            <person name="Huminiecki L."/>
            <person name="Iacono M."/>
            <person name="Ikeo K."/>
            <person name="Iwama A."/>
            <person name="Ishikawa T."/>
            <person name="Jakt M."/>
            <person name="Kanapin A."/>
            <person name="Katoh M."/>
            <person name="Kawasawa Y."/>
            <person name="Kelso J."/>
            <person name="Kitamura H."/>
            <person name="Kitano H."/>
            <person name="Kollias G."/>
            <person name="Krishnan S.P."/>
            <person name="Kruger A."/>
            <person name="Kummerfeld S.K."/>
            <person name="Kurochkin I.V."/>
            <person name="Lareau L.F."/>
            <person name="Lazarevic D."/>
            <person name="Lipovich L."/>
            <person name="Liu J."/>
            <person name="Liuni S."/>
            <person name="McWilliam S."/>
            <person name="Madan Babu M."/>
            <person name="Madera M."/>
            <person name="Marchionni L."/>
            <person name="Matsuda H."/>
            <person name="Matsuzawa S."/>
            <person name="Miki H."/>
            <person name="Mignone F."/>
            <person name="Miyake S."/>
            <person name="Morris K."/>
            <person name="Mottagui-Tabar S."/>
            <person name="Mulder N."/>
            <person name="Nakano N."/>
            <person name="Nakauchi H."/>
            <person name="Ng P."/>
            <person name="Nilsson R."/>
            <person name="Nishiguchi S."/>
            <person name="Nishikawa S."/>
            <person name="Nori F."/>
            <person name="Ohara O."/>
            <person name="Okazaki Y."/>
            <person name="Orlando V."/>
            <person name="Pang K.C."/>
            <person name="Pavan W.J."/>
            <person name="Pavesi G."/>
            <person name="Pesole G."/>
            <person name="Petrovsky N."/>
            <person name="Piazza S."/>
            <person name="Reed J."/>
            <person name="Reid J.F."/>
            <person name="Ring B.Z."/>
            <person name="Ringwald M."/>
            <person name="Rost B."/>
            <person name="Ruan Y."/>
            <person name="Salzberg S.L."/>
            <person name="Sandelin A."/>
            <person name="Schneider C."/>
            <person name="Schoenbach C."/>
            <person name="Sekiguchi K."/>
            <person name="Semple C.A."/>
            <person name="Seno S."/>
            <person name="Sessa L."/>
            <person name="Sheng Y."/>
            <person name="Shibata Y."/>
            <person name="Shimada H."/>
            <person name="Shimada K."/>
            <person name="Silva D."/>
            <person name="Sinclair B."/>
            <person name="Sperling S."/>
            <person name="Stupka E."/>
            <person name="Sugiura K."/>
            <person name="Sultana R."/>
            <person name="Takenaka Y."/>
            <person name="Taki K."/>
            <person name="Tammoja K."/>
            <person name="Tan S.L."/>
            <person name="Tang S."/>
            <person name="Taylor M.S."/>
            <person name="Tegner J."/>
            <person name="Teichmann S.A."/>
            <person name="Ueda H.R."/>
            <person name="van Nimwegen E."/>
            <person name="Verardo R."/>
            <person name="Wei C.L."/>
            <person name="Yagi K."/>
            <person name="Yamanishi H."/>
            <person name="Zabarovsky E."/>
            <person name="Zhu S."/>
            <person name="Zimmer A."/>
            <person name="Hide W."/>
            <person name="Bult C."/>
            <person name="Grimmond S.M."/>
            <person name="Teasdale R.D."/>
            <person name="Liu E.T."/>
            <person name="Brusic V."/>
            <person name="Quackenbush J."/>
            <person name="Wahlestedt C."/>
            <person name="Mattick J.S."/>
            <person name="Hume D.A."/>
            <person name="Kai C."/>
            <person name="Sasaki D."/>
            <person name="Tomaru Y."/>
            <person name="Fukuda S."/>
            <person name="Kanamori-Katayama M."/>
            <person name="Suzuki M."/>
            <person name="Aoki J."/>
            <person name="Arakawa T."/>
            <person name="Iida J."/>
            <person name="Imamura K."/>
            <person name="Itoh M."/>
            <person name="Kato T."/>
            <person name="Kawaji H."/>
            <person name="Kawagashira N."/>
            <person name="Kawashima T."/>
            <person name="Kojima M."/>
            <person name="Kondo S."/>
            <person name="Konno H."/>
            <person name="Nakano K."/>
            <person name="Ninomiya N."/>
            <person name="Nishio T."/>
            <person name="Okada M."/>
            <person name="Plessy C."/>
            <person name="Shibata K."/>
            <person name="Shiraki T."/>
            <person name="Suzuki S."/>
            <person name="Tagami M."/>
            <person name="Waki K."/>
            <person name="Watahiki A."/>
            <person name="Okamura-Oho Y."/>
            <person name="Suzuki H."/>
            <person name="Kawai J."/>
            <person name="Hayashizaki Y."/>
        </authorList>
    </citation>
    <scope>NUCLEOTIDE SEQUENCE [LARGE SCALE MRNA] (ISOFORM 2)</scope>
    <source>
        <tissue>Lung</tissue>
    </source>
</reference>
<reference key="3">
    <citation type="journal article" date="2004" name="Genome Res.">
        <title>The status, quality, and expansion of the NIH full-length cDNA project: the Mammalian Gene Collection (MGC).</title>
        <authorList>
            <consortium name="The MGC Project Team"/>
        </authorList>
    </citation>
    <scope>NUCLEOTIDE SEQUENCE [LARGE SCALE MRNA] (ISOFORM 1)</scope>
    <source>
        <strain>FVB/N-3</strain>
        <tissue>Mammary gland</tissue>
    </source>
</reference>
<reference key="4">
    <citation type="journal article" date="1998" name="J. Biol. Chem.">
        <title>A 29-kilodalton Golgi soluble N-ethylmaleimide-sensitive factor attachment protein receptor (Vti1-rp2) implicated in protein trafficking in the secretory pathway.</title>
        <authorList>
            <person name="Xu Y."/>
            <person name="Wong S.H."/>
            <person name="Tang B.L."/>
            <person name="Subramaniam V.N."/>
            <person name="Zhang T."/>
            <person name="Hong W."/>
        </authorList>
    </citation>
    <scope>IDENTIFICATION IN SNARE COMPLEX WITH VTI1A</scope>
    <scope>SUBCELLULAR LOCATION</scope>
</reference>
<reference key="5">
    <citation type="journal article" date="2010" name="Cell">
        <title>A tissue-specific atlas of mouse protein phosphorylation and expression.</title>
        <authorList>
            <person name="Huttlin E.L."/>
            <person name="Jedrychowski M.P."/>
            <person name="Elias J.E."/>
            <person name="Goswami T."/>
            <person name="Rad R."/>
            <person name="Beausoleil S.A."/>
            <person name="Villen J."/>
            <person name="Haas W."/>
            <person name="Sowa M.E."/>
            <person name="Gygi S.P."/>
        </authorList>
    </citation>
    <scope>IDENTIFICATION BY MASS SPECTROMETRY [LARGE SCALE ANALYSIS]</scope>
    <source>
        <tissue>Brain</tissue>
        <tissue>Brown adipose tissue</tissue>
        <tissue>Kidney</tissue>
        <tissue>Liver</tissue>
        <tissue>Lung</tissue>
        <tissue>Pancreas</tissue>
        <tissue>Spleen</tissue>
        <tissue>Testis</tissue>
    </source>
</reference>
<organism>
    <name type="scientific">Mus musculus</name>
    <name type="common">Mouse</name>
    <dbReference type="NCBI Taxonomy" id="10090"/>
    <lineage>
        <taxon>Eukaryota</taxon>
        <taxon>Metazoa</taxon>
        <taxon>Chordata</taxon>
        <taxon>Craniata</taxon>
        <taxon>Vertebrata</taxon>
        <taxon>Euteleostomi</taxon>
        <taxon>Mammalia</taxon>
        <taxon>Eutheria</taxon>
        <taxon>Euarchontoglires</taxon>
        <taxon>Glires</taxon>
        <taxon>Rodentia</taxon>
        <taxon>Myomorpha</taxon>
        <taxon>Muroidea</taxon>
        <taxon>Muridae</taxon>
        <taxon>Murinae</taxon>
        <taxon>Mus</taxon>
        <taxon>Mus</taxon>
    </lineage>
</organism>
<protein>
    <recommendedName>
        <fullName>Syntaxin-5</fullName>
    </recommendedName>
</protein>
<feature type="chain" id="PRO_0000210206" description="Syntaxin-5">
    <location>
        <begin position="1"/>
        <end position="355"/>
    </location>
</feature>
<feature type="topological domain" description="Cytoplasmic" evidence="3">
    <location>
        <begin position="1"/>
        <end position="333"/>
    </location>
</feature>
<feature type="transmembrane region" description="Helical; Anchor for type IV membrane protein" evidence="3">
    <location>
        <begin position="334"/>
        <end position="354"/>
    </location>
</feature>
<feature type="topological domain" description="Vesicular" evidence="3">
    <location>
        <position position="355"/>
    </location>
</feature>
<feature type="domain" description="t-SNARE coiled-coil homology" evidence="4">
    <location>
        <begin position="263"/>
        <end position="325"/>
    </location>
</feature>
<feature type="coiled-coil region" evidence="3">
    <location>
        <begin position="287"/>
        <end position="318"/>
    </location>
</feature>
<feature type="short sequence motif" description="IxM motif; signal for cargo packaging into COPII-coated vesicles" evidence="2">
    <location>
        <begin position="245"/>
        <end position="247"/>
    </location>
</feature>
<feature type="splice variant" id="VSP_020118" description="In isoform 2." evidence="6 7">
    <location>
        <begin position="1"/>
        <end position="54"/>
    </location>
</feature>
<feature type="sequence conflict" description="In Ref. 3; AAH21883." evidence="8" ref="3">
    <original>C</original>
    <variation>S</variation>
    <location>
        <position position="91"/>
    </location>
</feature>
<feature type="sequence conflict" description="In Ref. 1; AAF36981." evidence="8" ref="1">
    <original>LQ</original>
    <variation>FE</variation>
    <location>
        <begin position="179"/>
        <end position="180"/>
    </location>
</feature>
<proteinExistence type="evidence at protein level"/>
<name>STX5_MOUSE</name>
<gene>
    <name type="primary">Stx5</name>
    <name type="synonym">Stx5a</name>
</gene>
<sequence length="355" mass="39713">MIPRKRYGSKNTDQGVYLGLSKTQVLSPATAISSSSDSTPLPTPVALVPSPPDTMSCRDRTQEFQSACKSLQSRQNGIQTSKPALHAARQCSEFTLMARRIGKDLSNTFAKLEKLTILAKRKSLFDDKAVEIEELTYIIKQDINSLNKQIAQLQDFVRAKGSQSGRHLQTHSNTIVVSLQSKLASMSNDFKSVLEVRTENLKQQRNRREQFSRAPVSALPLAPNNLGGGPIILGAESRASRDVAIDMMDPRTSQQLQLIDEQDSYIQSRADTMQNIESTIVELGSIFQQLAHMVKEQEETIQRIDENVLGAQLDVEAAHSEILKYFQSVTSNRWLMVKIFLILIVFFIIFVVFLA</sequence>
<evidence type="ECO:0000250" key="1">
    <source>
        <dbReference type="UniProtKB" id="Q08851"/>
    </source>
</evidence>
<evidence type="ECO:0000250" key="2">
    <source>
        <dbReference type="UniProtKB" id="Q13190"/>
    </source>
</evidence>
<evidence type="ECO:0000255" key="3"/>
<evidence type="ECO:0000255" key="4">
    <source>
        <dbReference type="PROSITE-ProRule" id="PRU00202"/>
    </source>
</evidence>
<evidence type="ECO:0000269" key="5">
    <source>
    </source>
</evidence>
<evidence type="ECO:0000303" key="6">
    <source>
    </source>
</evidence>
<evidence type="ECO:0000303" key="7">
    <source ref="1"/>
</evidence>
<evidence type="ECO:0000305" key="8"/>
<accession>Q8K1E0</accession>
<accession>Q3TM79</accession>
<accession>Q99J28</accession>
<accession>Q9JKP2</accession>
<keyword id="KW-0024">Alternative initiation</keyword>
<keyword id="KW-0175">Coiled coil</keyword>
<keyword id="KW-0333">Golgi apparatus</keyword>
<keyword id="KW-0472">Membrane</keyword>
<keyword id="KW-1185">Reference proteome</keyword>
<keyword id="KW-0812">Transmembrane</keyword>
<keyword id="KW-1133">Transmembrane helix</keyword>
<keyword id="KW-0813">Transport</keyword>
<dbReference type="EMBL" id="AF232709">
    <property type="protein sequence ID" value="AAF36981.1"/>
    <property type="molecule type" value="mRNA"/>
</dbReference>
<dbReference type="EMBL" id="AK166087">
    <property type="protein sequence ID" value="BAE38563.1"/>
    <property type="molecule type" value="mRNA"/>
</dbReference>
<dbReference type="EMBL" id="BC004849">
    <property type="protein sequence ID" value="AAH04849.1"/>
    <property type="status" value="ALT_INIT"/>
    <property type="molecule type" value="mRNA"/>
</dbReference>
<dbReference type="EMBL" id="BC021883">
    <property type="protein sequence ID" value="AAH21883.1"/>
    <property type="status" value="ALT_INIT"/>
    <property type="molecule type" value="mRNA"/>
</dbReference>
<dbReference type="CCDS" id="CCDS29542.2">
    <molecule id="Q8K1E0-1"/>
</dbReference>
<dbReference type="RefSeq" id="NP_001161271.1">
    <molecule id="Q8K1E0-1"/>
    <property type="nucleotide sequence ID" value="NM_001167799.1"/>
</dbReference>
<dbReference type="RefSeq" id="NP_062803.4">
    <molecule id="Q8K1E0-1"/>
    <property type="nucleotide sequence ID" value="NM_019829.4"/>
</dbReference>
<dbReference type="SMR" id="Q8K1E0"/>
<dbReference type="BioGRID" id="207947">
    <property type="interactions" value="3"/>
</dbReference>
<dbReference type="FunCoup" id="Q8K1E0">
    <property type="interactions" value="2923"/>
</dbReference>
<dbReference type="STRING" id="10090.ENSMUSP00000134854"/>
<dbReference type="GlyGen" id="Q8K1E0">
    <property type="glycosylation" value="2 sites, 1 O-linked glycan (1 site)"/>
</dbReference>
<dbReference type="iPTMnet" id="Q8K1E0"/>
<dbReference type="PhosphoSitePlus" id="Q8K1E0"/>
<dbReference type="SwissPalm" id="Q8K1E0"/>
<dbReference type="jPOST" id="Q8K1E0"/>
<dbReference type="PaxDb" id="10090-ENSMUSP00000134854"/>
<dbReference type="PeptideAtlas" id="Q8K1E0"/>
<dbReference type="ProteomicsDB" id="257095">
    <molecule id="Q8K1E0-1"/>
</dbReference>
<dbReference type="ProteomicsDB" id="257096">
    <molecule id="Q8K1E0-2"/>
</dbReference>
<dbReference type="Pumba" id="Q8K1E0"/>
<dbReference type="Antibodypedia" id="723">
    <property type="antibodies" value="166 antibodies from 28 providers"/>
</dbReference>
<dbReference type="DNASU" id="56389"/>
<dbReference type="Ensembl" id="ENSMUST00000073430.14">
    <molecule id="Q8K1E0-1"/>
    <property type="protein sequence ID" value="ENSMUSP00000073136.8"/>
    <property type="gene ID" value="ENSMUSG00000010110.18"/>
</dbReference>
<dbReference type="Ensembl" id="ENSMUST00000176381.8">
    <molecule id="Q8K1E0-1"/>
    <property type="protein sequence ID" value="ENSMUSP00000134854.2"/>
    <property type="gene ID" value="ENSMUSG00000010110.18"/>
</dbReference>
<dbReference type="GeneID" id="56389"/>
<dbReference type="KEGG" id="mmu:56389"/>
<dbReference type="UCSC" id="uc008gmo.2">
    <molecule id="Q8K1E0-1"/>
    <property type="organism name" value="mouse"/>
</dbReference>
<dbReference type="AGR" id="MGI:1928483"/>
<dbReference type="CTD" id="56389"/>
<dbReference type="MGI" id="MGI:1928483">
    <property type="gene designation" value="Stx5a"/>
</dbReference>
<dbReference type="VEuPathDB" id="HostDB:ENSMUSG00000010110"/>
<dbReference type="eggNOG" id="KOG0812">
    <property type="taxonomic scope" value="Eukaryota"/>
</dbReference>
<dbReference type="GeneTree" id="ENSGT01000000214440"/>
<dbReference type="HOGENOM" id="CLU_044998_0_1_1"/>
<dbReference type="InParanoid" id="Q8K1E0"/>
<dbReference type="OMA" id="EHNHNVV"/>
<dbReference type="PhylomeDB" id="Q8K1E0"/>
<dbReference type="TreeFam" id="TF315068"/>
<dbReference type="Reactome" id="R-MMU-204005">
    <property type="pathway name" value="COPII-mediated vesicle transport"/>
</dbReference>
<dbReference type="Reactome" id="R-MMU-5694530">
    <property type="pathway name" value="Cargo concentration in the ER"/>
</dbReference>
<dbReference type="Reactome" id="R-MMU-6807878">
    <property type="pathway name" value="COPI-mediated anterograde transport"/>
</dbReference>
<dbReference type="Reactome" id="R-MMU-6811438">
    <property type="pathway name" value="Intra-Golgi traffic"/>
</dbReference>
<dbReference type="Reactome" id="R-MMU-8980692">
    <property type="pathway name" value="RHOA GTPase cycle"/>
</dbReference>
<dbReference type="Reactome" id="R-MMU-9013106">
    <property type="pathway name" value="RHOC GTPase cycle"/>
</dbReference>
<dbReference type="Reactome" id="R-MMU-9013408">
    <property type="pathway name" value="RHOG GTPase cycle"/>
</dbReference>
<dbReference type="Reactome" id="R-MMU-9609523">
    <property type="pathway name" value="Insertion of tail-anchored proteins into the endoplasmic reticulum membrane"/>
</dbReference>
<dbReference type="BioGRID-ORCS" id="56389">
    <property type="hits" value="27 hits in 81 CRISPR screens"/>
</dbReference>
<dbReference type="ChiTaRS" id="Stx5a">
    <property type="organism name" value="mouse"/>
</dbReference>
<dbReference type="PRO" id="PR:Q8K1E0"/>
<dbReference type="Proteomes" id="UP000000589">
    <property type="component" value="Chromosome 19"/>
</dbReference>
<dbReference type="RNAct" id="Q8K1E0">
    <property type="molecule type" value="protein"/>
</dbReference>
<dbReference type="Bgee" id="ENSMUSG00000010110">
    <property type="expression patterns" value="Expressed in primary oocyte and 264 other cell types or tissues"/>
</dbReference>
<dbReference type="ExpressionAtlas" id="Q8K1E0">
    <property type="expression patterns" value="baseline and differential"/>
</dbReference>
<dbReference type="GO" id="GO:0005829">
    <property type="term" value="C:cytosol"/>
    <property type="evidence" value="ECO:0007669"/>
    <property type="project" value="GOC"/>
</dbReference>
<dbReference type="GO" id="GO:0033116">
    <property type="term" value="C:endoplasmic reticulum-Golgi intermediate compartment membrane"/>
    <property type="evidence" value="ECO:0007669"/>
    <property type="project" value="UniProtKB-SubCell"/>
</dbReference>
<dbReference type="GO" id="GO:0000139">
    <property type="term" value="C:Golgi membrane"/>
    <property type="evidence" value="ECO:0000304"/>
    <property type="project" value="MGI"/>
</dbReference>
<dbReference type="GO" id="GO:0031982">
    <property type="term" value="C:vesicle"/>
    <property type="evidence" value="ECO:0007669"/>
    <property type="project" value="Ensembl"/>
</dbReference>
<dbReference type="GO" id="GO:0005484">
    <property type="term" value="F:SNAP receptor activity"/>
    <property type="evidence" value="ECO:0007669"/>
    <property type="project" value="Ensembl"/>
</dbReference>
<dbReference type="GO" id="GO:0034498">
    <property type="term" value="P:early endosome to Golgi transport"/>
    <property type="evidence" value="ECO:0007669"/>
    <property type="project" value="Ensembl"/>
</dbReference>
<dbReference type="GO" id="GO:0090166">
    <property type="term" value="P:Golgi disassembly"/>
    <property type="evidence" value="ECO:0007669"/>
    <property type="project" value="Ensembl"/>
</dbReference>
<dbReference type="GO" id="GO:0006886">
    <property type="term" value="P:intracellular protein transport"/>
    <property type="evidence" value="ECO:0007669"/>
    <property type="project" value="InterPro"/>
</dbReference>
<dbReference type="GO" id="GO:0045732">
    <property type="term" value="P:positive regulation of protein catabolic process"/>
    <property type="evidence" value="ECO:0007669"/>
    <property type="project" value="Ensembl"/>
</dbReference>
<dbReference type="GO" id="GO:1903358">
    <property type="term" value="P:regulation of Golgi organization"/>
    <property type="evidence" value="ECO:0007669"/>
    <property type="project" value="Ensembl"/>
</dbReference>
<dbReference type="GO" id="GO:0016192">
    <property type="term" value="P:vesicle-mediated transport"/>
    <property type="evidence" value="ECO:0000304"/>
    <property type="project" value="MGI"/>
</dbReference>
<dbReference type="CDD" id="cd15844">
    <property type="entry name" value="SNARE_syntaxin5"/>
    <property type="match status" value="1"/>
</dbReference>
<dbReference type="FunFam" id="1.20.5.110:FF:000187">
    <property type="entry name" value="SNARE domain containing protein"/>
    <property type="match status" value="1"/>
</dbReference>
<dbReference type="FunFam" id="1.20.58.70:FF:000005">
    <property type="entry name" value="syntaxin-5 isoform X1"/>
    <property type="match status" value="1"/>
</dbReference>
<dbReference type="Gene3D" id="1.20.58.70">
    <property type="match status" value="1"/>
</dbReference>
<dbReference type="InterPro" id="IPR010989">
    <property type="entry name" value="SNARE"/>
</dbReference>
<dbReference type="InterPro" id="IPR045242">
    <property type="entry name" value="Syntaxin"/>
</dbReference>
<dbReference type="InterPro" id="IPR021538">
    <property type="entry name" value="Syntaxin-5_N"/>
</dbReference>
<dbReference type="InterPro" id="IPR006012">
    <property type="entry name" value="Syntaxin/epimorphin_CS"/>
</dbReference>
<dbReference type="InterPro" id="IPR000727">
    <property type="entry name" value="T_SNARE_dom"/>
</dbReference>
<dbReference type="PANTHER" id="PTHR19957">
    <property type="entry name" value="SYNTAXIN"/>
    <property type="match status" value="1"/>
</dbReference>
<dbReference type="PANTHER" id="PTHR19957:SF3">
    <property type="entry name" value="SYNTAXIN-5"/>
    <property type="match status" value="1"/>
</dbReference>
<dbReference type="Pfam" id="PF05739">
    <property type="entry name" value="SNARE"/>
    <property type="match status" value="1"/>
</dbReference>
<dbReference type="Pfam" id="PF11416">
    <property type="entry name" value="Syntaxin-5_N"/>
    <property type="match status" value="1"/>
</dbReference>
<dbReference type="SMART" id="SM00397">
    <property type="entry name" value="t_SNARE"/>
    <property type="match status" value="1"/>
</dbReference>
<dbReference type="SUPFAM" id="SSF47661">
    <property type="entry name" value="t-snare proteins"/>
    <property type="match status" value="1"/>
</dbReference>
<dbReference type="PROSITE" id="PS00914">
    <property type="entry name" value="SYNTAXIN"/>
    <property type="match status" value="1"/>
</dbReference>
<dbReference type="PROSITE" id="PS50192">
    <property type="entry name" value="T_SNARE"/>
    <property type="match status" value="1"/>
</dbReference>
<comment type="function">
    <text evidence="1">Mediates endoplasmic reticulum to Golgi transport. Together with p115/USO1 and GM130/GOLGA2, involved in vesicle tethering and fusion at the cis-Golgi membrane to maintain the stacked and inter-connected structure of the Golgi apparatus.</text>
</comment>
<comment type="function">
    <molecule>Isoform 2</molecule>
    <text evidence="2">Required for Golgi to endoplasmic reticulum retrogade transport, and for intra-Golgi transport.</text>
</comment>
<comment type="subunit">
    <text evidence="1 2 5">Part of a ternary complex containing STX5A, NSFL1C and VCP. Part of a unique SNARE complex composed of the Golgi SNAREs GOSR1, GOSR2, YKT6 and VTI1A (PubMed:9705316). Component of a SNARE complex consisting of STX5, YKT6, GOSR1 and BET1L (By similarity). Interacts with BET1L (By similarity). Interacts with BET1 (By similarity). Interacts with COG4 (By similarity). Interacts with GM130/GOLGA2 (By similarity). Interacts (via IxM motif) with SEC24C and SEC24D; mediates STX5 packaging into COPII-coated vesicles (By similarity). Interacts with VLDLR; this interaction mediates VLDLR translocation from the endoplasmic reticulum to the plasma membrane (By similarity).</text>
</comment>
<comment type="subcellular location">
    <subcellularLocation>
        <location evidence="1">Endoplasmic reticulum-Golgi intermediate compartment membrane</location>
        <topology evidence="3">Single-pass type IV membrane protein</topology>
    </subcellularLocation>
    <subcellularLocation>
        <location evidence="1">Golgi apparatus membrane</location>
    </subcellularLocation>
    <text evidence="1">Localizes throughout the Golgi apparatus, but most abundant in the cis-most cisternae.</text>
</comment>
<comment type="alternative products">
    <event type="alternative initiation"/>
    <isoform>
        <id>Q8K1E0-1</id>
        <name>1</name>
        <sequence type="displayed"/>
    </isoform>
    <isoform>
        <id>Q8K1E0-2</id>
        <name>2</name>
        <sequence type="described" ref="VSP_020118"/>
    </isoform>
</comment>
<comment type="miscellaneous">
    <molecule>Isoform 2</molecule>
    <text evidence="8">Produced by alternative initiation at Met-55 of isoform 1.</text>
</comment>
<comment type="similarity">
    <text evidence="8">Belongs to the syntaxin family.</text>
</comment>
<comment type="caution">
    <text evidence="8">It is uncertain whether Met-1 or Met-55 is the initiator. However, for the rat ortholog it has been shown that the equivalent alternative isoform is produced by alternative initiation at a conserved initiator methionine at position 55.</text>
</comment>
<comment type="sequence caution" evidence="8">
    <conflict type="erroneous initiation">
        <sequence resource="EMBL-CDS" id="AAH04849"/>
    </conflict>
    <text>Truncated N-terminus.</text>
</comment>
<comment type="sequence caution" evidence="8">
    <conflict type="erroneous initiation">
        <sequence resource="EMBL-CDS" id="AAH21883"/>
    </conflict>
    <text>Truncated N-terminus.</text>
</comment>